<evidence type="ECO:0000250" key="1"/>
<evidence type="ECO:0000269" key="2">
    <source>
    </source>
</evidence>
<evidence type="ECO:0000305" key="3"/>
<organism>
    <name type="scientific">Gonatodes vittatus</name>
    <name type="common">Wiegmann's striped gecko</name>
    <name type="synonym">Gymnodactylus vittatus</name>
    <dbReference type="NCBI Taxonomy" id="104610"/>
    <lineage>
        <taxon>Eukaryota</taxon>
        <taxon>Metazoa</taxon>
        <taxon>Chordata</taxon>
        <taxon>Craniata</taxon>
        <taxon>Vertebrata</taxon>
        <taxon>Euteleostomi</taxon>
        <taxon>Lepidosauria</taxon>
        <taxon>Squamata</taxon>
        <taxon>Bifurcata</taxon>
        <taxon>Gekkota</taxon>
        <taxon>Sphaerodactylidae</taxon>
        <taxon>Gonatodes</taxon>
    </lineage>
</organism>
<gene>
    <name type="primary">CRBPI</name>
</gene>
<feature type="initiator methionine" description="Removed" evidence="2">
    <location>
        <position position="1"/>
    </location>
</feature>
<feature type="chain" id="PRO_0000067402" description="Iota-crystallin">
    <location>
        <begin position="2"/>
        <end position="63" status="greater than"/>
    </location>
</feature>
<feature type="non-terminal residue">
    <location>
        <position position="63"/>
    </location>
</feature>
<proteinExistence type="evidence at protein level"/>
<reference key="1">
    <citation type="journal article" date="2000" name="Proc. Natl. Acad. Sci. U.S.A.">
        <title>Gecko iota-crystallin: how cellular retinol-binding protein became an eye lens ultraviolet filter.</title>
        <authorList>
            <person name="Werten P.J.L."/>
            <person name="Roell B."/>
            <person name="van Aalten D.M.F."/>
            <person name="de Jong W.W."/>
        </authorList>
    </citation>
    <scope>PROTEIN SEQUENCE OF 2-63</scope>
    <scope>FUNCTION</scope>
    <source>
        <tissue>Lens</tissue>
    </source>
</reference>
<protein>
    <recommendedName>
        <fullName>Iota-crystallin</fullName>
    </recommendedName>
</protein>
<comment type="function">
    <text evidence="2">Binds vitamin A2 in the eye lens and thus functions as a UV filter. Intracellular transport of retinol.</text>
</comment>
<comment type="domain">
    <text evidence="1">Forms a beta-barrel structure that accommodates hydrophobic ligands in its interior.</text>
</comment>
<comment type="similarity">
    <text evidence="3">Belongs to the calycin superfamily. Fatty-acid binding protein (FABP) family.</text>
</comment>
<name>IOTA_GONVI</name>
<keyword id="KW-0903">Direct protein sequencing</keyword>
<keyword id="KW-0683">Retinol-binding</keyword>
<keyword id="KW-0813">Transport</keyword>
<keyword id="KW-0845">Vitamin A</keyword>
<dbReference type="GO" id="GO:0016918">
    <property type="term" value="F:retinal binding"/>
    <property type="evidence" value="ECO:0007669"/>
    <property type="project" value="UniProtKB-KW"/>
</dbReference>
<dbReference type="GO" id="GO:0019841">
    <property type="term" value="F:retinol binding"/>
    <property type="evidence" value="ECO:0007669"/>
    <property type="project" value="UniProtKB-KW"/>
</dbReference>
<dbReference type="Gene3D" id="2.40.128.20">
    <property type="match status" value="1"/>
</dbReference>
<dbReference type="InterPro" id="IPR012674">
    <property type="entry name" value="Calycin"/>
</dbReference>
<dbReference type="InterPro" id="IPR031259">
    <property type="entry name" value="ILBP"/>
</dbReference>
<dbReference type="PANTHER" id="PTHR11955">
    <property type="entry name" value="FATTY ACID BINDING PROTEIN"/>
    <property type="match status" value="1"/>
</dbReference>
<dbReference type="SUPFAM" id="SSF50814">
    <property type="entry name" value="Lipocalins"/>
    <property type="match status" value="1"/>
</dbReference>
<sequence>MPPNLTGYWRFVSQDNMDNYLRALDLNVALRKLVXLLKFDKEIVHEGNHMTIRTLXTXRNYXI</sequence>
<accession>P82025</accession>